<gene>
    <name evidence="1" type="primary">azoR</name>
    <name type="ordered locus">RL1959</name>
</gene>
<name>AZOR_RHIJ3</name>
<sequence length="204" mass="21448">MSSILLLTSSPRADSLSTPIAVDLAEKLKSQNPGSVVVRRDLAANPLPHIDDLFTGAIRKPPEARTAEETVAVKTSDELVNELLAADTIVISTGLINFNIYSSLKTWIDNVARAGLTFKYTESGPVGLATGKKVYVVLASGGVYSQGPAAPLNHAVPYLKSVLGFLGISDIETIYVEGLAFGPEAAEKAIDAAKSRVQEIALAA</sequence>
<proteinExistence type="inferred from homology"/>
<comment type="function">
    <text evidence="1">Quinone reductase that provides resistance to thiol-specific stress caused by electrophilic quinones.</text>
</comment>
<comment type="function">
    <text evidence="1">Also exhibits azoreductase activity. Catalyzes the reductive cleavage of the azo bond in aromatic azo compounds to the corresponding amines.</text>
</comment>
<comment type="catalytic activity">
    <reaction evidence="1">
        <text>2 a quinone + NADH + H(+) = 2 a 1,4-benzosemiquinone + NAD(+)</text>
        <dbReference type="Rhea" id="RHEA:65952"/>
        <dbReference type="ChEBI" id="CHEBI:15378"/>
        <dbReference type="ChEBI" id="CHEBI:57540"/>
        <dbReference type="ChEBI" id="CHEBI:57945"/>
        <dbReference type="ChEBI" id="CHEBI:132124"/>
        <dbReference type="ChEBI" id="CHEBI:134225"/>
    </reaction>
</comment>
<comment type="catalytic activity">
    <reaction evidence="1">
        <text>N,N-dimethyl-1,4-phenylenediamine + anthranilate + 2 NAD(+) = 2-(4-dimethylaminophenyl)diazenylbenzoate + 2 NADH + 2 H(+)</text>
        <dbReference type="Rhea" id="RHEA:55872"/>
        <dbReference type="ChEBI" id="CHEBI:15378"/>
        <dbReference type="ChEBI" id="CHEBI:15783"/>
        <dbReference type="ChEBI" id="CHEBI:16567"/>
        <dbReference type="ChEBI" id="CHEBI:57540"/>
        <dbReference type="ChEBI" id="CHEBI:57945"/>
        <dbReference type="ChEBI" id="CHEBI:71579"/>
        <dbReference type="EC" id="1.7.1.17"/>
    </reaction>
</comment>
<comment type="cofactor">
    <cofactor evidence="1">
        <name>FMN</name>
        <dbReference type="ChEBI" id="CHEBI:58210"/>
    </cofactor>
    <text evidence="1">Binds 1 FMN per subunit.</text>
</comment>
<comment type="subunit">
    <text evidence="1">Homodimer.</text>
</comment>
<comment type="similarity">
    <text evidence="1">Belongs to the azoreductase type 1 family.</text>
</comment>
<dbReference type="EC" id="1.6.5.-" evidence="1"/>
<dbReference type="EC" id="1.7.1.17" evidence="1"/>
<dbReference type="EMBL" id="AM236080">
    <property type="protein sequence ID" value="CAK07452.1"/>
    <property type="molecule type" value="Genomic_DNA"/>
</dbReference>
<dbReference type="RefSeq" id="WP_011651578.1">
    <property type="nucleotide sequence ID" value="NC_008380.1"/>
</dbReference>
<dbReference type="SMR" id="Q1MHV8"/>
<dbReference type="EnsemblBacteria" id="CAK07452">
    <property type="protein sequence ID" value="CAK07452"/>
    <property type="gene ID" value="RL1959"/>
</dbReference>
<dbReference type="KEGG" id="rle:RL1959"/>
<dbReference type="eggNOG" id="COG1182">
    <property type="taxonomic scope" value="Bacteria"/>
</dbReference>
<dbReference type="HOGENOM" id="CLU_088964_0_0_5"/>
<dbReference type="Proteomes" id="UP000006575">
    <property type="component" value="Chromosome"/>
</dbReference>
<dbReference type="GO" id="GO:0009055">
    <property type="term" value="F:electron transfer activity"/>
    <property type="evidence" value="ECO:0007669"/>
    <property type="project" value="UniProtKB-UniRule"/>
</dbReference>
<dbReference type="GO" id="GO:0010181">
    <property type="term" value="F:FMN binding"/>
    <property type="evidence" value="ECO:0007669"/>
    <property type="project" value="UniProtKB-UniRule"/>
</dbReference>
<dbReference type="GO" id="GO:0016652">
    <property type="term" value="F:oxidoreductase activity, acting on NAD(P)H as acceptor"/>
    <property type="evidence" value="ECO:0007669"/>
    <property type="project" value="UniProtKB-UniRule"/>
</dbReference>
<dbReference type="GO" id="GO:0016655">
    <property type="term" value="F:oxidoreductase activity, acting on NAD(P)H, quinone or similar compound as acceptor"/>
    <property type="evidence" value="ECO:0007669"/>
    <property type="project" value="InterPro"/>
</dbReference>
<dbReference type="Gene3D" id="3.40.50.360">
    <property type="match status" value="1"/>
</dbReference>
<dbReference type="HAMAP" id="MF_01216">
    <property type="entry name" value="Azoreductase_type1"/>
    <property type="match status" value="1"/>
</dbReference>
<dbReference type="InterPro" id="IPR003680">
    <property type="entry name" value="Flavodoxin_fold"/>
</dbReference>
<dbReference type="InterPro" id="IPR029039">
    <property type="entry name" value="Flavoprotein-like_sf"/>
</dbReference>
<dbReference type="InterPro" id="IPR050104">
    <property type="entry name" value="FMN-dep_NADH:Q_OxRdtase_AzoR1"/>
</dbReference>
<dbReference type="InterPro" id="IPR023048">
    <property type="entry name" value="NADH:quinone_OxRdtase_FMN_depd"/>
</dbReference>
<dbReference type="PANTHER" id="PTHR43741">
    <property type="entry name" value="FMN-DEPENDENT NADH-AZOREDUCTASE 1"/>
    <property type="match status" value="1"/>
</dbReference>
<dbReference type="PANTHER" id="PTHR43741:SF2">
    <property type="entry name" value="FMN-DEPENDENT NADH:QUINONE OXIDOREDUCTASE"/>
    <property type="match status" value="1"/>
</dbReference>
<dbReference type="Pfam" id="PF02525">
    <property type="entry name" value="Flavodoxin_2"/>
    <property type="match status" value="1"/>
</dbReference>
<dbReference type="SUPFAM" id="SSF52218">
    <property type="entry name" value="Flavoproteins"/>
    <property type="match status" value="1"/>
</dbReference>
<feature type="chain" id="PRO_0000245962" description="FMN-dependent NADH:quinone oxidoreductase">
    <location>
        <begin position="1"/>
        <end position="204"/>
    </location>
</feature>
<feature type="binding site" evidence="1">
    <location>
        <position position="10"/>
    </location>
    <ligand>
        <name>FMN</name>
        <dbReference type="ChEBI" id="CHEBI:58210"/>
    </ligand>
</feature>
<feature type="binding site" evidence="1">
    <location>
        <begin position="15"/>
        <end position="17"/>
    </location>
    <ligand>
        <name>FMN</name>
        <dbReference type="ChEBI" id="CHEBI:58210"/>
    </ligand>
</feature>
<reference key="1">
    <citation type="journal article" date="2006" name="Genome Biol.">
        <title>The genome of Rhizobium leguminosarum has recognizable core and accessory components.</title>
        <authorList>
            <person name="Young J.P.W."/>
            <person name="Crossman L.C."/>
            <person name="Johnston A.W.B."/>
            <person name="Thomson N.R."/>
            <person name="Ghazoui Z.F."/>
            <person name="Hull K.H."/>
            <person name="Wexler M."/>
            <person name="Curson A.R.J."/>
            <person name="Todd J.D."/>
            <person name="Poole P.S."/>
            <person name="Mauchline T.H."/>
            <person name="East A.K."/>
            <person name="Quail M.A."/>
            <person name="Churcher C."/>
            <person name="Arrowsmith C."/>
            <person name="Cherevach I."/>
            <person name="Chillingworth T."/>
            <person name="Clarke K."/>
            <person name="Cronin A."/>
            <person name="Davis P."/>
            <person name="Fraser A."/>
            <person name="Hance Z."/>
            <person name="Hauser H."/>
            <person name="Jagels K."/>
            <person name="Moule S."/>
            <person name="Mungall K."/>
            <person name="Norbertczak H."/>
            <person name="Rabbinowitsch E."/>
            <person name="Sanders M."/>
            <person name="Simmonds M."/>
            <person name="Whitehead S."/>
            <person name="Parkhill J."/>
        </authorList>
    </citation>
    <scope>NUCLEOTIDE SEQUENCE [LARGE SCALE GENOMIC DNA]</scope>
    <source>
        <strain>DSM 114642 / LMG 32736 / 3841</strain>
    </source>
</reference>
<organism>
    <name type="scientific">Rhizobium johnstonii (strain DSM 114642 / LMG 32736 / 3841)</name>
    <name type="common">Rhizobium leguminosarum bv. viciae</name>
    <dbReference type="NCBI Taxonomy" id="216596"/>
    <lineage>
        <taxon>Bacteria</taxon>
        <taxon>Pseudomonadati</taxon>
        <taxon>Pseudomonadota</taxon>
        <taxon>Alphaproteobacteria</taxon>
        <taxon>Hyphomicrobiales</taxon>
        <taxon>Rhizobiaceae</taxon>
        <taxon>Rhizobium/Agrobacterium group</taxon>
        <taxon>Rhizobium</taxon>
        <taxon>Rhizobium johnstonii</taxon>
    </lineage>
</organism>
<keyword id="KW-0285">Flavoprotein</keyword>
<keyword id="KW-0288">FMN</keyword>
<keyword id="KW-0520">NAD</keyword>
<keyword id="KW-0560">Oxidoreductase</keyword>
<evidence type="ECO:0000255" key="1">
    <source>
        <dbReference type="HAMAP-Rule" id="MF_01216"/>
    </source>
</evidence>
<accession>Q1MHV8</accession>
<protein>
    <recommendedName>
        <fullName evidence="1">FMN-dependent NADH:quinone oxidoreductase</fullName>
        <ecNumber evidence="1">1.6.5.-</ecNumber>
    </recommendedName>
    <alternativeName>
        <fullName evidence="1">Azo-dye reductase</fullName>
    </alternativeName>
    <alternativeName>
        <fullName evidence="1">FMN-dependent NADH-azo compound oxidoreductase</fullName>
    </alternativeName>
    <alternativeName>
        <fullName evidence="1">FMN-dependent NADH-azoreductase</fullName>
        <ecNumber evidence="1">1.7.1.17</ecNumber>
    </alternativeName>
</protein>